<organism>
    <name type="scientific">Salmonella enteritidis PT4 (strain P125109)</name>
    <dbReference type="NCBI Taxonomy" id="550537"/>
    <lineage>
        <taxon>Bacteria</taxon>
        <taxon>Pseudomonadati</taxon>
        <taxon>Pseudomonadota</taxon>
        <taxon>Gammaproteobacteria</taxon>
        <taxon>Enterobacterales</taxon>
        <taxon>Enterobacteriaceae</taxon>
        <taxon>Salmonella</taxon>
    </lineage>
</organism>
<proteinExistence type="inferred from homology"/>
<keyword id="KW-0963">Cytoplasm</keyword>
<evidence type="ECO:0000255" key="1">
    <source>
        <dbReference type="HAMAP-Rule" id="MF_00730"/>
    </source>
</evidence>
<comment type="subcellular location">
    <subcellularLocation>
        <location evidence="1">Cytoplasm</location>
        <location evidence="1">Nucleoid</location>
    </subcellularLocation>
</comment>
<comment type="similarity">
    <text evidence="1">Belongs to the YejK family.</text>
</comment>
<name>NDPA_SALEP</name>
<reference key="1">
    <citation type="journal article" date="2008" name="Genome Res.">
        <title>Comparative genome analysis of Salmonella enteritidis PT4 and Salmonella gallinarum 287/91 provides insights into evolutionary and host adaptation pathways.</title>
        <authorList>
            <person name="Thomson N.R."/>
            <person name="Clayton D.J."/>
            <person name="Windhorst D."/>
            <person name="Vernikos G."/>
            <person name="Davidson S."/>
            <person name="Churcher C."/>
            <person name="Quail M.A."/>
            <person name="Stevens M."/>
            <person name="Jones M.A."/>
            <person name="Watson M."/>
            <person name="Barron A."/>
            <person name="Layton A."/>
            <person name="Pickard D."/>
            <person name="Kingsley R.A."/>
            <person name="Bignell A."/>
            <person name="Clark L."/>
            <person name="Harris B."/>
            <person name="Ormond D."/>
            <person name="Abdellah Z."/>
            <person name="Brooks K."/>
            <person name="Cherevach I."/>
            <person name="Chillingworth T."/>
            <person name="Woodward J."/>
            <person name="Norberczak H."/>
            <person name="Lord A."/>
            <person name="Arrowsmith C."/>
            <person name="Jagels K."/>
            <person name="Moule S."/>
            <person name="Mungall K."/>
            <person name="Saunders M."/>
            <person name="Whitehead S."/>
            <person name="Chabalgoity J.A."/>
            <person name="Maskell D."/>
            <person name="Humphreys T."/>
            <person name="Roberts M."/>
            <person name="Barrow P.A."/>
            <person name="Dougan G."/>
            <person name="Parkhill J."/>
        </authorList>
    </citation>
    <scope>NUCLEOTIDE SEQUENCE [LARGE SCALE GENOMIC DNA]</scope>
    <source>
        <strain>P125109</strain>
    </source>
</reference>
<gene>
    <name evidence="1" type="primary">yejK</name>
    <name type="ordered locus">SEN2219</name>
</gene>
<feature type="chain" id="PRO_1000132729" description="Nucleoid-associated protein YejK">
    <location>
        <begin position="1"/>
        <end position="335"/>
    </location>
</feature>
<protein>
    <recommendedName>
        <fullName evidence="1">Nucleoid-associated protein YejK</fullName>
    </recommendedName>
</protein>
<dbReference type="EMBL" id="AM933172">
    <property type="protein sequence ID" value="CAR33804.1"/>
    <property type="molecule type" value="Genomic_DNA"/>
</dbReference>
<dbReference type="RefSeq" id="WP_000050807.1">
    <property type="nucleotide sequence ID" value="NC_011294.1"/>
</dbReference>
<dbReference type="SMR" id="B5R196"/>
<dbReference type="KEGG" id="set:SEN2219"/>
<dbReference type="HOGENOM" id="CLU_063050_0_1_6"/>
<dbReference type="Proteomes" id="UP000000613">
    <property type="component" value="Chromosome"/>
</dbReference>
<dbReference type="GO" id="GO:0043590">
    <property type="term" value="C:bacterial nucleoid"/>
    <property type="evidence" value="ECO:0007669"/>
    <property type="project" value="TreeGrafter"/>
</dbReference>
<dbReference type="GO" id="GO:0005737">
    <property type="term" value="C:cytoplasm"/>
    <property type="evidence" value="ECO:0007669"/>
    <property type="project" value="UniProtKB-UniRule"/>
</dbReference>
<dbReference type="GO" id="GO:0003690">
    <property type="term" value="F:double-stranded DNA binding"/>
    <property type="evidence" value="ECO:0007669"/>
    <property type="project" value="TreeGrafter"/>
</dbReference>
<dbReference type="GO" id="GO:0003727">
    <property type="term" value="F:single-stranded RNA binding"/>
    <property type="evidence" value="ECO:0007669"/>
    <property type="project" value="TreeGrafter"/>
</dbReference>
<dbReference type="HAMAP" id="MF_00730">
    <property type="entry name" value="NdpA"/>
    <property type="match status" value="1"/>
</dbReference>
<dbReference type="InterPro" id="IPR007358">
    <property type="entry name" value="Nucleoid_associated_NdpA"/>
</dbReference>
<dbReference type="NCBIfam" id="NF001557">
    <property type="entry name" value="PRK00378.1"/>
    <property type="match status" value="1"/>
</dbReference>
<dbReference type="PANTHER" id="PTHR38772">
    <property type="match status" value="1"/>
</dbReference>
<dbReference type="PANTHER" id="PTHR38772:SF1">
    <property type="entry name" value="NUCLEOID-ASSOCIATED PROTEIN YEJK"/>
    <property type="match status" value="1"/>
</dbReference>
<dbReference type="Pfam" id="PF04245">
    <property type="entry name" value="NA37"/>
    <property type="match status" value="1"/>
</dbReference>
<accession>B5R196</accession>
<sequence length="335" mass="37963">MSLDINQIALHQLIKRDEQNLELVLRDSLLEPTTTVVEMVAELHRVYSAKNKAYGLFNEESELAQALRLQRQGEEDFLAFSRAATGRLRDELAKYPFADGGIVLFCHYRYLAVEYLLVTVLNNLSSMRVNENLDINPTHYLDINHADIVARIDLTEWETNPQSTRYLTFLKGRVGRKVADFFMDFLGASEGLNAKAQNRGLLQAVDDFTAEAQLDKAERQNVRQQVYSYCNEQLQAGEEIELESLSKELSGVSEVSFSEFTAEKGYELEESFPADRSTLRQLTKYAGSGGGLTINFDAMLLGERIFWDPATDTLTIKGTPPNLREQLQRRTSGEK</sequence>